<gene>
    <name evidence="1" type="primary">ygfZ</name>
    <name type="ordered locus">STY3204</name>
    <name type="ordered locus">t2966</name>
</gene>
<accession>Q8Z3X4</accession>
<accession>Q7C7D1</accession>
<proteinExistence type="inferred from homology"/>
<comment type="function">
    <text evidence="1">Folate-binding protein involved in regulating the level of ATP-DnaA and in the modification of some tRNAs. It is probably a key factor in regulatory networks that act via tRNA modification, such as initiation of chromosomal replication.</text>
</comment>
<comment type="subcellular location">
    <subcellularLocation>
        <location evidence="1">Cytoplasm</location>
    </subcellularLocation>
</comment>
<comment type="similarity">
    <text evidence="1">Belongs to the tRNA-modifying YgfZ family.</text>
</comment>
<sequence>MAFISFPPRHPSSSARLPLTLIALDDWALSSITGVDSEKYIQGQVTADVSQMTEQQHLLAAHCDAKGKMWSTLRLFRERDGFAWIERRSVREAQLTELKKYAVFSKVVIAPDDERVLLGVAGFQARAALANVFSELPNSENQVVRDGASTLLWFEHPAERFLLVTDVATANMLTEKLHGEAELNNSQQWLALDIEAGIPVIDAANSGQFIPQATNLQALGGISFKKGCYTGQEMVARAKFRGANKRALWLLAGKASRVPEAGEDLELQMGENWRRTGAILAATQLDDGQLLVQAVMNNDLEAESVFRVRDDANTLHIVPLPYSLEE</sequence>
<reference key="1">
    <citation type="journal article" date="2001" name="Nature">
        <title>Complete genome sequence of a multiple drug resistant Salmonella enterica serovar Typhi CT18.</title>
        <authorList>
            <person name="Parkhill J."/>
            <person name="Dougan G."/>
            <person name="James K.D."/>
            <person name="Thomson N.R."/>
            <person name="Pickard D."/>
            <person name="Wain J."/>
            <person name="Churcher C.M."/>
            <person name="Mungall K.L."/>
            <person name="Bentley S.D."/>
            <person name="Holden M.T.G."/>
            <person name="Sebaihia M."/>
            <person name="Baker S."/>
            <person name="Basham D."/>
            <person name="Brooks K."/>
            <person name="Chillingworth T."/>
            <person name="Connerton P."/>
            <person name="Cronin A."/>
            <person name="Davis P."/>
            <person name="Davies R.M."/>
            <person name="Dowd L."/>
            <person name="White N."/>
            <person name="Farrar J."/>
            <person name="Feltwell T."/>
            <person name="Hamlin N."/>
            <person name="Haque A."/>
            <person name="Hien T.T."/>
            <person name="Holroyd S."/>
            <person name="Jagels K."/>
            <person name="Krogh A."/>
            <person name="Larsen T.S."/>
            <person name="Leather S."/>
            <person name="Moule S."/>
            <person name="O'Gaora P."/>
            <person name="Parry C."/>
            <person name="Quail M.A."/>
            <person name="Rutherford K.M."/>
            <person name="Simmonds M."/>
            <person name="Skelton J."/>
            <person name="Stevens K."/>
            <person name="Whitehead S."/>
            <person name="Barrell B.G."/>
        </authorList>
    </citation>
    <scope>NUCLEOTIDE SEQUENCE [LARGE SCALE GENOMIC DNA]</scope>
    <source>
        <strain>CT18</strain>
    </source>
</reference>
<reference key="2">
    <citation type="journal article" date="2003" name="J. Bacteriol.">
        <title>Comparative genomics of Salmonella enterica serovar Typhi strains Ty2 and CT18.</title>
        <authorList>
            <person name="Deng W."/>
            <person name="Liou S.-R."/>
            <person name="Plunkett G. III"/>
            <person name="Mayhew G.F."/>
            <person name="Rose D.J."/>
            <person name="Burland V."/>
            <person name="Kodoyianni V."/>
            <person name="Schwartz D.C."/>
            <person name="Blattner F.R."/>
        </authorList>
    </citation>
    <scope>NUCLEOTIDE SEQUENCE [LARGE SCALE GENOMIC DNA]</scope>
    <source>
        <strain>ATCC 700931 / Ty2</strain>
    </source>
</reference>
<organism>
    <name type="scientific">Salmonella typhi</name>
    <dbReference type="NCBI Taxonomy" id="90370"/>
    <lineage>
        <taxon>Bacteria</taxon>
        <taxon>Pseudomonadati</taxon>
        <taxon>Pseudomonadota</taxon>
        <taxon>Gammaproteobacteria</taxon>
        <taxon>Enterobacterales</taxon>
        <taxon>Enterobacteriaceae</taxon>
        <taxon>Salmonella</taxon>
    </lineage>
</organism>
<feature type="chain" id="PRO_0000262897" description="tRNA-modifying protein YgfZ">
    <location>
        <begin position="1"/>
        <end position="326"/>
    </location>
</feature>
<feature type="binding site" evidence="1">
    <location>
        <position position="27"/>
    </location>
    <ligand>
        <name>folate</name>
        <dbReference type="ChEBI" id="CHEBI:62501"/>
    </ligand>
</feature>
<feature type="binding site" evidence="1">
    <location>
        <position position="189"/>
    </location>
    <ligand>
        <name>folate</name>
        <dbReference type="ChEBI" id="CHEBI:62501"/>
    </ligand>
</feature>
<dbReference type="EMBL" id="AL513382">
    <property type="protein sequence ID" value="CAD02878.1"/>
    <property type="molecule type" value="Genomic_DNA"/>
</dbReference>
<dbReference type="EMBL" id="AE014613">
    <property type="protein sequence ID" value="AAO70518.1"/>
    <property type="molecule type" value="Genomic_DNA"/>
</dbReference>
<dbReference type="RefSeq" id="NP_457446.1">
    <property type="nucleotide sequence ID" value="NC_003198.1"/>
</dbReference>
<dbReference type="RefSeq" id="WP_000874170.1">
    <property type="nucleotide sequence ID" value="NZ_WSUR01000024.1"/>
</dbReference>
<dbReference type="SMR" id="Q8Z3X4"/>
<dbReference type="STRING" id="220341.gene:17587079"/>
<dbReference type="KEGG" id="stt:t2966"/>
<dbReference type="KEGG" id="sty:STY3204"/>
<dbReference type="PATRIC" id="fig|220341.7.peg.3263"/>
<dbReference type="eggNOG" id="COG0354">
    <property type="taxonomic scope" value="Bacteria"/>
</dbReference>
<dbReference type="HOGENOM" id="CLU_007884_6_1_6"/>
<dbReference type="OMA" id="FVPQMLN"/>
<dbReference type="OrthoDB" id="9796287at2"/>
<dbReference type="Proteomes" id="UP000000541">
    <property type="component" value="Chromosome"/>
</dbReference>
<dbReference type="Proteomes" id="UP000002670">
    <property type="component" value="Chromosome"/>
</dbReference>
<dbReference type="GO" id="GO:0005737">
    <property type="term" value="C:cytoplasm"/>
    <property type="evidence" value="ECO:0007669"/>
    <property type="project" value="UniProtKB-SubCell"/>
</dbReference>
<dbReference type="GO" id="GO:0005542">
    <property type="term" value="F:folic acid binding"/>
    <property type="evidence" value="ECO:0007669"/>
    <property type="project" value="UniProtKB-UniRule"/>
</dbReference>
<dbReference type="GO" id="GO:0016226">
    <property type="term" value="P:iron-sulfur cluster assembly"/>
    <property type="evidence" value="ECO:0007669"/>
    <property type="project" value="TreeGrafter"/>
</dbReference>
<dbReference type="GO" id="GO:0009451">
    <property type="term" value="P:RNA modification"/>
    <property type="evidence" value="ECO:0007669"/>
    <property type="project" value="InterPro"/>
</dbReference>
<dbReference type="GO" id="GO:0008033">
    <property type="term" value="P:tRNA processing"/>
    <property type="evidence" value="ECO:0007669"/>
    <property type="project" value="UniProtKB-UniRule"/>
</dbReference>
<dbReference type="FunFam" id="2.40.30.160:FF:000001">
    <property type="entry name" value="tRNA-modifying protein YgfZ"/>
    <property type="match status" value="1"/>
</dbReference>
<dbReference type="FunFam" id="3.30.70.1400:FF:000002">
    <property type="entry name" value="tRNA-modifying protein YgfZ"/>
    <property type="match status" value="1"/>
</dbReference>
<dbReference type="FunFam" id="3.30.70.1630:FF:000001">
    <property type="entry name" value="tRNA-modifying protein YgfZ"/>
    <property type="match status" value="1"/>
</dbReference>
<dbReference type="Gene3D" id="2.40.30.160">
    <property type="match status" value="1"/>
</dbReference>
<dbReference type="Gene3D" id="3.30.70.1630">
    <property type="match status" value="1"/>
</dbReference>
<dbReference type="Gene3D" id="3.30.70.1400">
    <property type="entry name" value="Aminomethyltransferase beta-barrel domains"/>
    <property type="match status" value="1"/>
</dbReference>
<dbReference type="HAMAP" id="MF_01175">
    <property type="entry name" value="tRNA_modifying_YgfZ"/>
    <property type="match status" value="1"/>
</dbReference>
<dbReference type="InterPro" id="IPR006222">
    <property type="entry name" value="GCV_T_N"/>
</dbReference>
<dbReference type="InterPro" id="IPR029043">
    <property type="entry name" value="GcvT/YgfZ_C"/>
</dbReference>
<dbReference type="InterPro" id="IPR023758">
    <property type="entry name" value="tRNA-modifying_YgfZ"/>
</dbReference>
<dbReference type="InterPro" id="IPR045179">
    <property type="entry name" value="YgfZ/GcvT"/>
</dbReference>
<dbReference type="InterPro" id="IPR017703">
    <property type="entry name" value="YgfZ/GcvT_CS"/>
</dbReference>
<dbReference type="InterPro" id="IPR048451">
    <property type="entry name" value="YgfZ_barrel"/>
</dbReference>
<dbReference type="NCBIfam" id="NF007110">
    <property type="entry name" value="PRK09559.1"/>
    <property type="match status" value="1"/>
</dbReference>
<dbReference type="NCBIfam" id="TIGR03317">
    <property type="entry name" value="ygfZ_signature"/>
    <property type="match status" value="1"/>
</dbReference>
<dbReference type="PANTHER" id="PTHR22602">
    <property type="entry name" value="TRANSFERASE CAF17, MITOCHONDRIAL-RELATED"/>
    <property type="match status" value="1"/>
</dbReference>
<dbReference type="PANTHER" id="PTHR22602:SF0">
    <property type="entry name" value="TRANSFERASE CAF17, MITOCHONDRIAL-RELATED"/>
    <property type="match status" value="1"/>
</dbReference>
<dbReference type="Pfam" id="PF01571">
    <property type="entry name" value="GCV_T"/>
    <property type="match status" value="1"/>
</dbReference>
<dbReference type="Pfam" id="PF21130">
    <property type="entry name" value="YgfZ_barrel"/>
    <property type="match status" value="1"/>
</dbReference>
<dbReference type="SUPFAM" id="SSF101790">
    <property type="entry name" value="Aminomethyltransferase beta-barrel domain"/>
    <property type="match status" value="1"/>
</dbReference>
<dbReference type="SUPFAM" id="SSF103025">
    <property type="entry name" value="Folate-binding domain"/>
    <property type="match status" value="1"/>
</dbReference>
<name>YGFZ_SALTI</name>
<protein>
    <recommendedName>
        <fullName evidence="1">tRNA-modifying protein YgfZ</fullName>
    </recommendedName>
</protein>
<keyword id="KW-0963">Cytoplasm</keyword>
<keyword id="KW-0290">Folate-binding</keyword>
<keyword id="KW-0819">tRNA processing</keyword>
<evidence type="ECO:0000255" key="1">
    <source>
        <dbReference type="HAMAP-Rule" id="MF_01175"/>
    </source>
</evidence>